<organism>
    <name type="scientific">Colwellia psychrerythraea (strain 34H / ATCC BAA-681)</name>
    <name type="common">Vibrio psychroerythus</name>
    <dbReference type="NCBI Taxonomy" id="167879"/>
    <lineage>
        <taxon>Bacteria</taxon>
        <taxon>Pseudomonadati</taxon>
        <taxon>Pseudomonadota</taxon>
        <taxon>Gammaproteobacteria</taxon>
        <taxon>Alteromonadales</taxon>
        <taxon>Colwelliaceae</taxon>
        <taxon>Colwellia</taxon>
    </lineage>
</organism>
<accession>Q47WV1</accession>
<evidence type="ECO:0000255" key="1">
    <source>
        <dbReference type="HAMAP-Rule" id="MF_00402"/>
    </source>
</evidence>
<evidence type="ECO:0000305" key="2"/>
<reference key="1">
    <citation type="journal article" date="2005" name="Proc. Natl. Acad. Sci. U.S.A.">
        <title>The psychrophilic lifestyle as revealed by the genome sequence of Colwellia psychrerythraea 34H through genomic and proteomic analyses.</title>
        <authorList>
            <person name="Methe B.A."/>
            <person name="Nelson K.E."/>
            <person name="Deming J.W."/>
            <person name="Momen B."/>
            <person name="Melamud E."/>
            <person name="Zhang X."/>
            <person name="Moult J."/>
            <person name="Madupu R."/>
            <person name="Nelson W.C."/>
            <person name="Dodson R.J."/>
            <person name="Brinkac L.M."/>
            <person name="Daugherty S.C."/>
            <person name="Durkin A.S."/>
            <person name="DeBoy R.T."/>
            <person name="Kolonay J.F."/>
            <person name="Sullivan S.A."/>
            <person name="Zhou L."/>
            <person name="Davidsen T.M."/>
            <person name="Wu M."/>
            <person name="Huston A.L."/>
            <person name="Lewis M."/>
            <person name="Weaver B."/>
            <person name="Weidman J.F."/>
            <person name="Khouri H."/>
            <person name="Utterback T.R."/>
            <person name="Feldblyum T.V."/>
            <person name="Fraser C.M."/>
        </authorList>
    </citation>
    <scope>NUCLEOTIDE SEQUENCE [LARGE SCALE GENOMIC DNA]</scope>
    <source>
        <strain>34H / ATCC BAA-681</strain>
    </source>
</reference>
<proteinExistence type="inferred from homology"/>
<feature type="chain" id="PRO_0000226840" description="Large ribosomal subunit protein bL19">
    <location>
        <begin position="1"/>
        <end position="117"/>
    </location>
</feature>
<name>RL19_COLP3</name>
<sequence length="117" mass="13166">MSKILEMLEQEQMKTDLPAFAPGDTVVVQVKVTEADKSRLQAFEGVVIAVKSRGLHSAFTVRKISNGVGVERVFQTHSPIVDSIEVKRRGDVRQAKLYYLRELSGRKARIKEKLAKK</sequence>
<gene>
    <name evidence="1" type="primary">rplS</name>
    <name type="ordered locus">CPS_4066</name>
</gene>
<comment type="function">
    <text evidence="1">This protein is located at the 30S-50S ribosomal subunit interface and may play a role in the structure and function of the aminoacyl-tRNA binding site.</text>
</comment>
<comment type="similarity">
    <text evidence="1">Belongs to the bacterial ribosomal protein bL19 family.</text>
</comment>
<keyword id="KW-0687">Ribonucleoprotein</keyword>
<keyword id="KW-0689">Ribosomal protein</keyword>
<dbReference type="EMBL" id="CP000083">
    <property type="protein sequence ID" value="AAZ27520.1"/>
    <property type="molecule type" value="Genomic_DNA"/>
</dbReference>
<dbReference type="RefSeq" id="WP_011044802.1">
    <property type="nucleotide sequence ID" value="NC_003910.7"/>
</dbReference>
<dbReference type="SMR" id="Q47WV1"/>
<dbReference type="STRING" id="167879.CPS_4066"/>
<dbReference type="KEGG" id="cps:CPS_4066"/>
<dbReference type="eggNOG" id="COG0335">
    <property type="taxonomic scope" value="Bacteria"/>
</dbReference>
<dbReference type="HOGENOM" id="CLU_103507_2_1_6"/>
<dbReference type="Proteomes" id="UP000000547">
    <property type="component" value="Chromosome"/>
</dbReference>
<dbReference type="GO" id="GO:0022625">
    <property type="term" value="C:cytosolic large ribosomal subunit"/>
    <property type="evidence" value="ECO:0007669"/>
    <property type="project" value="TreeGrafter"/>
</dbReference>
<dbReference type="GO" id="GO:0003735">
    <property type="term" value="F:structural constituent of ribosome"/>
    <property type="evidence" value="ECO:0007669"/>
    <property type="project" value="InterPro"/>
</dbReference>
<dbReference type="GO" id="GO:0006412">
    <property type="term" value="P:translation"/>
    <property type="evidence" value="ECO:0007669"/>
    <property type="project" value="UniProtKB-UniRule"/>
</dbReference>
<dbReference type="FunFam" id="2.30.30.790:FF:000001">
    <property type="entry name" value="50S ribosomal protein L19"/>
    <property type="match status" value="1"/>
</dbReference>
<dbReference type="Gene3D" id="2.30.30.790">
    <property type="match status" value="1"/>
</dbReference>
<dbReference type="HAMAP" id="MF_00402">
    <property type="entry name" value="Ribosomal_bL19"/>
    <property type="match status" value="1"/>
</dbReference>
<dbReference type="InterPro" id="IPR001857">
    <property type="entry name" value="Ribosomal_bL19"/>
</dbReference>
<dbReference type="InterPro" id="IPR018257">
    <property type="entry name" value="Ribosomal_bL19_CS"/>
</dbReference>
<dbReference type="InterPro" id="IPR038657">
    <property type="entry name" value="Ribosomal_bL19_sf"/>
</dbReference>
<dbReference type="InterPro" id="IPR008991">
    <property type="entry name" value="Translation_prot_SH3-like_sf"/>
</dbReference>
<dbReference type="NCBIfam" id="TIGR01024">
    <property type="entry name" value="rplS_bact"/>
    <property type="match status" value="1"/>
</dbReference>
<dbReference type="PANTHER" id="PTHR15680:SF9">
    <property type="entry name" value="LARGE RIBOSOMAL SUBUNIT PROTEIN BL19M"/>
    <property type="match status" value="1"/>
</dbReference>
<dbReference type="PANTHER" id="PTHR15680">
    <property type="entry name" value="RIBOSOMAL PROTEIN L19"/>
    <property type="match status" value="1"/>
</dbReference>
<dbReference type="Pfam" id="PF01245">
    <property type="entry name" value="Ribosomal_L19"/>
    <property type="match status" value="1"/>
</dbReference>
<dbReference type="PIRSF" id="PIRSF002191">
    <property type="entry name" value="Ribosomal_L19"/>
    <property type="match status" value="1"/>
</dbReference>
<dbReference type="PRINTS" id="PR00061">
    <property type="entry name" value="RIBOSOMALL19"/>
</dbReference>
<dbReference type="SUPFAM" id="SSF50104">
    <property type="entry name" value="Translation proteins SH3-like domain"/>
    <property type="match status" value="1"/>
</dbReference>
<dbReference type="PROSITE" id="PS01015">
    <property type="entry name" value="RIBOSOMAL_L19"/>
    <property type="match status" value="1"/>
</dbReference>
<protein>
    <recommendedName>
        <fullName evidence="1">Large ribosomal subunit protein bL19</fullName>
    </recommendedName>
    <alternativeName>
        <fullName evidence="2">50S ribosomal protein L19</fullName>
    </alternativeName>
</protein>